<accession>Q8DA18</accession>
<dbReference type="EC" id="3.5.2.7" evidence="1"/>
<dbReference type="EMBL" id="AE016795">
    <property type="protein sequence ID" value="AAO10766.1"/>
    <property type="molecule type" value="Genomic_DNA"/>
</dbReference>
<dbReference type="RefSeq" id="WP_011080259.1">
    <property type="nucleotide sequence ID" value="NC_004459.3"/>
</dbReference>
<dbReference type="SMR" id="Q8DA18"/>
<dbReference type="KEGG" id="vvu:VV1_2392"/>
<dbReference type="HOGENOM" id="CLU_041647_0_1_6"/>
<dbReference type="UniPathway" id="UPA00379">
    <property type="reaction ID" value="UER00551"/>
</dbReference>
<dbReference type="Proteomes" id="UP000002275">
    <property type="component" value="Chromosome 1"/>
</dbReference>
<dbReference type="GO" id="GO:0005737">
    <property type="term" value="C:cytoplasm"/>
    <property type="evidence" value="ECO:0007669"/>
    <property type="project" value="UniProtKB-SubCell"/>
</dbReference>
<dbReference type="GO" id="GO:0050480">
    <property type="term" value="F:imidazolonepropionase activity"/>
    <property type="evidence" value="ECO:0007669"/>
    <property type="project" value="UniProtKB-UniRule"/>
</dbReference>
<dbReference type="GO" id="GO:0005506">
    <property type="term" value="F:iron ion binding"/>
    <property type="evidence" value="ECO:0007669"/>
    <property type="project" value="UniProtKB-UniRule"/>
</dbReference>
<dbReference type="GO" id="GO:0008270">
    <property type="term" value="F:zinc ion binding"/>
    <property type="evidence" value="ECO:0007669"/>
    <property type="project" value="UniProtKB-UniRule"/>
</dbReference>
<dbReference type="GO" id="GO:0019556">
    <property type="term" value="P:L-histidine catabolic process to glutamate and formamide"/>
    <property type="evidence" value="ECO:0007669"/>
    <property type="project" value="UniProtKB-UniPathway"/>
</dbReference>
<dbReference type="GO" id="GO:0019557">
    <property type="term" value="P:L-histidine catabolic process to glutamate and formate"/>
    <property type="evidence" value="ECO:0007669"/>
    <property type="project" value="UniProtKB-UniPathway"/>
</dbReference>
<dbReference type="CDD" id="cd01296">
    <property type="entry name" value="Imidazolone-5PH"/>
    <property type="match status" value="1"/>
</dbReference>
<dbReference type="FunFam" id="3.20.20.140:FF:000007">
    <property type="entry name" value="Imidazolonepropionase"/>
    <property type="match status" value="1"/>
</dbReference>
<dbReference type="Gene3D" id="3.20.20.140">
    <property type="entry name" value="Metal-dependent hydrolases"/>
    <property type="match status" value="1"/>
</dbReference>
<dbReference type="Gene3D" id="2.30.40.10">
    <property type="entry name" value="Urease, subunit C, domain 1"/>
    <property type="match status" value="1"/>
</dbReference>
<dbReference type="HAMAP" id="MF_00372">
    <property type="entry name" value="HutI"/>
    <property type="match status" value="1"/>
</dbReference>
<dbReference type="InterPro" id="IPR006680">
    <property type="entry name" value="Amidohydro-rel"/>
</dbReference>
<dbReference type="InterPro" id="IPR005920">
    <property type="entry name" value="HutI"/>
</dbReference>
<dbReference type="InterPro" id="IPR011059">
    <property type="entry name" value="Metal-dep_hydrolase_composite"/>
</dbReference>
<dbReference type="InterPro" id="IPR032466">
    <property type="entry name" value="Metal_Hydrolase"/>
</dbReference>
<dbReference type="NCBIfam" id="TIGR01224">
    <property type="entry name" value="hutI"/>
    <property type="match status" value="1"/>
</dbReference>
<dbReference type="PANTHER" id="PTHR42752">
    <property type="entry name" value="IMIDAZOLONEPROPIONASE"/>
    <property type="match status" value="1"/>
</dbReference>
<dbReference type="PANTHER" id="PTHR42752:SF1">
    <property type="entry name" value="IMIDAZOLONEPROPIONASE-RELATED"/>
    <property type="match status" value="1"/>
</dbReference>
<dbReference type="Pfam" id="PF01979">
    <property type="entry name" value="Amidohydro_1"/>
    <property type="match status" value="1"/>
</dbReference>
<dbReference type="SUPFAM" id="SSF51338">
    <property type="entry name" value="Composite domain of metallo-dependent hydrolases"/>
    <property type="match status" value="1"/>
</dbReference>
<dbReference type="SUPFAM" id="SSF51556">
    <property type="entry name" value="Metallo-dependent hydrolases"/>
    <property type="match status" value="1"/>
</dbReference>
<name>HUTI_VIBVU</name>
<organism>
    <name type="scientific">Vibrio vulnificus (strain CMCP6)</name>
    <dbReference type="NCBI Taxonomy" id="216895"/>
    <lineage>
        <taxon>Bacteria</taxon>
        <taxon>Pseudomonadati</taxon>
        <taxon>Pseudomonadota</taxon>
        <taxon>Gammaproteobacteria</taxon>
        <taxon>Vibrionales</taxon>
        <taxon>Vibrionaceae</taxon>
        <taxon>Vibrio</taxon>
    </lineage>
</organism>
<keyword id="KW-0963">Cytoplasm</keyword>
<keyword id="KW-0369">Histidine metabolism</keyword>
<keyword id="KW-0378">Hydrolase</keyword>
<keyword id="KW-0408">Iron</keyword>
<keyword id="KW-0479">Metal-binding</keyword>
<keyword id="KW-0862">Zinc</keyword>
<feature type="chain" id="PRO_0000160973" description="Imidazolonepropionase">
    <location>
        <begin position="1"/>
        <end position="406"/>
    </location>
</feature>
<feature type="binding site" evidence="1">
    <location>
        <position position="65"/>
    </location>
    <ligand>
        <name>Fe(3+)</name>
        <dbReference type="ChEBI" id="CHEBI:29034"/>
    </ligand>
</feature>
<feature type="binding site" evidence="1">
    <location>
        <position position="65"/>
    </location>
    <ligand>
        <name>Zn(2+)</name>
        <dbReference type="ChEBI" id="CHEBI:29105"/>
    </ligand>
</feature>
<feature type="binding site" evidence="1">
    <location>
        <position position="67"/>
    </location>
    <ligand>
        <name>Fe(3+)</name>
        <dbReference type="ChEBI" id="CHEBI:29034"/>
    </ligand>
</feature>
<feature type="binding site" evidence="1">
    <location>
        <position position="67"/>
    </location>
    <ligand>
        <name>Zn(2+)</name>
        <dbReference type="ChEBI" id="CHEBI:29105"/>
    </ligand>
</feature>
<feature type="binding site" evidence="1">
    <location>
        <position position="74"/>
    </location>
    <ligand>
        <name>4-imidazolone-5-propanoate</name>
        <dbReference type="ChEBI" id="CHEBI:77893"/>
    </ligand>
</feature>
<feature type="binding site" evidence="1">
    <location>
        <position position="137"/>
    </location>
    <ligand>
        <name>4-imidazolone-5-propanoate</name>
        <dbReference type="ChEBI" id="CHEBI:77893"/>
    </ligand>
</feature>
<feature type="binding site" evidence="1">
    <location>
        <position position="137"/>
    </location>
    <ligand>
        <name>N-formimidoyl-L-glutamate</name>
        <dbReference type="ChEBI" id="CHEBI:58928"/>
    </ligand>
</feature>
<feature type="binding site" evidence="1">
    <location>
        <position position="170"/>
    </location>
    <ligand>
        <name>4-imidazolone-5-propanoate</name>
        <dbReference type="ChEBI" id="CHEBI:77893"/>
    </ligand>
</feature>
<feature type="binding site" evidence="1">
    <location>
        <position position="235"/>
    </location>
    <ligand>
        <name>Fe(3+)</name>
        <dbReference type="ChEBI" id="CHEBI:29034"/>
    </ligand>
</feature>
<feature type="binding site" evidence="1">
    <location>
        <position position="235"/>
    </location>
    <ligand>
        <name>Zn(2+)</name>
        <dbReference type="ChEBI" id="CHEBI:29105"/>
    </ligand>
</feature>
<feature type="binding site" evidence="1">
    <location>
        <position position="238"/>
    </location>
    <ligand>
        <name>4-imidazolone-5-propanoate</name>
        <dbReference type="ChEBI" id="CHEBI:77893"/>
    </ligand>
</feature>
<feature type="binding site" evidence="1">
    <location>
        <position position="310"/>
    </location>
    <ligand>
        <name>Fe(3+)</name>
        <dbReference type="ChEBI" id="CHEBI:29034"/>
    </ligand>
</feature>
<feature type="binding site" evidence="1">
    <location>
        <position position="310"/>
    </location>
    <ligand>
        <name>Zn(2+)</name>
        <dbReference type="ChEBI" id="CHEBI:29105"/>
    </ligand>
</feature>
<feature type="binding site" evidence="1">
    <location>
        <position position="312"/>
    </location>
    <ligand>
        <name>N-formimidoyl-L-glutamate</name>
        <dbReference type="ChEBI" id="CHEBI:58928"/>
    </ligand>
</feature>
<feature type="binding site" evidence="1">
    <location>
        <position position="314"/>
    </location>
    <ligand>
        <name>N-formimidoyl-L-glutamate</name>
        <dbReference type="ChEBI" id="CHEBI:58928"/>
    </ligand>
</feature>
<feature type="binding site" evidence="1">
    <location>
        <position position="315"/>
    </location>
    <ligand>
        <name>4-imidazolone-5-propanoate</name>
        <dbReference type="ChEBI" id="CHEBI:77893"/>
    </ligand>
</feature>
<sequence>MDLLLTNARLVTLQSGEMGYQPSTPMSIGIKAGKIHYLGIDTALAATKQIDLKGKLVTPGLIDCHTHLVYAGNRSNEFEMRLQGVPYQEIARQGGGILSTVYATRQASEAQLLEQTLPRLDGLLASGVTSVEVKSGYGLTLVDEIKMLRVAKSLSQHRLVKVTPTLLAAHALPPEFTGRANDYIEFICQEIIPLVAEEQLATSVDVFCESIGFDLAQTERVYACAVEHGLRIKGHTEQLSNLGGTALTARYQGLSADHIEFLDPAGVEALARSSTVATLLPGAFYFLRETQLPPIELLRQFGVPMAIASDVNPGTSPFCDLTLMMNMACTLFRLTPEEALRGVTQNAAQALGYAESRGQIKTGYEADLAIWQIEHPADLSYQVGTQRLFARVVDGQFEQHKECCDE</sequence>
<proteinExistence type="inferred from homology"/>
<protein>
    <recommendedName>
        <fullName evidence="1">Imidazolonepropionase</fullName>
        <ecNumber evidence="1">3.5.2.7</ecNumber>
    </recommendedName>
    <alternativeName>
        <fullName evidence="1">Imidazolone-5-propionate hydrolase</fullName>
    </alternativeName>
</protein>
<reference key="1">
    <citation type="submission" date="2002-12" db="EMBL/GenBank/DDBJ databases">
        <title>Complete genome sequence of Vibrio vulnificus CMCP6.</title>
        <authorList>
            <person name="Rhee J.H."/>
            <person name="Kim S.Y."/>
            <person name="Chung S.S."/>
            <person name="Kim J.J."/>
            <person name="Moon Y.H."/>
            <person name="Jeong H."/>
            <person name="Choy H.E."/>
        </authorList>
    </citation>
    <scope>NUCLEOTIDE SEQUENCE [LARGE SCALE GENOMIC DNA]</scope>
    <source>
        <strain>CMCP6</strain>
    </source>
</reference>
<gene>
    <name evidence="1" type="primary">hutI</name>
    <name type="ordered locus">VV1_2392</name>
</gene>
<evidence type="ECO:0000255" key="1">
    <source>
        <dbReference type="HAMAP-Rule" id="MF_00372"/>
    </source>
</evidence>
<comment type="function">
    <text evidence="1">Catalyzes the hydrolytic cleavage of the carbon-nitrogen bond in imidazolone-5-propanoate to yield N-formimidoyl-L-glutamate. It is the third step in the universal histidine degradation pathway.</text>
</comment>
<comment type="catalytic activity">
    <reaction evidence="1">
        <text>4-imidazolone-5-propanoate + H2O = N-formimidoyl-L-glutamate</text>
        <dbReference type="Rhea" id="RHEA:23660"/>
        <dbReference type="ChEBI" id="CHEBI:15377"/>
        <dbReference type="ChEBI" id="CHEBI:58928"/>
        <dbReference type="ChEBI" id="CHEBI:77893"/>
        <dbReference type="EC" id="3.5.2.7"/>
    </reaction>
</comment>
<comment type="cofactor">
    <cofactor evidence="1">
        <name>Zn(2+)</name>
        <dbReference type="ChEBI" id="CHEBI:29105"/>
    </cofactor>
    <cofactor evidence="1">
        <name>Fe(3+)</name>
        <dbReference type="ChEBI" id="CHEBI:29034"/>
    </cofactor>
    <text evidence="1">Binds 1 zinc or iron ion per subunit.</text>
</comment>
<comment type="pathway">
    <text evidence="1">Amino-acid degradation; L-histidine degradation into L-glutamate; N-formimidoyl-L-glutamate from L-histidine: step 3/3.</text>
</comment>
<comment type="subcellular location">
    <subcellularLocation>
        <location evidence="1">Cytoplasm</location>
    </subcellularLocation>
</comment>
<comment type="similarity">
    <text evidence="1">Belongs to the metallo-dependent hydrolases superfamily. HutI family.</text>
</comment>